<sequence>MTIELKPGGLLIAIEGIDGAGKTTLARRLTTTLEAAGARVVLSKEPTNGPWGTKLRQSAATGRLSADEEAELLIRDRHEHVDTLIAPALARGDIVILDRYFPSMVAYQGAAGLPLDELLELNAFAPRPDVLLLLDLPPPTGLARIRARGDAPNHFETQDNLERCRTIFAGLELPGKHVVDASADADSVLRQAHAIIVAALADRLSGDGAPADTGKAALELLSAGRPA</sequence>
<reference key="1">
    <citation type="journal article" date="2005" name="Nucleic Acids Res.">
        <title>The genome sequence of Xanthomonas oryzae pathovar oryzae KACC10331, the bacterial blight pathogen of rice.</title>
        <authorList>
            <person name="Lee B.-M."/>
            <person name="Park Y.-J."/>
            <person name="Park D.-S."/>
            <person name="Kang H.-W."/>
            <person name="Kim J.-G."/>
            <person name="Song E.-S."/>
            <person name="Park I.-C."/>
            <person name="Yoon U.-H."/>
            <person name="Hahn J.-H."/>
            <person name="Koo B.-S."/>
            <person name="Lee G.-B."/>
            <person name="Kim H."/>
            <person name="Park H.-S."/>
            <person name="Yoon K.-O."/>
            <person name="Kim J.-H."/>
            <person name="Jung C.-H."/>
            <person name="Koh N.-H."/>
            <person name="Seo J.-S."/>
            <person name="Go S.-J."/>
        </authorList>
    </citation>
    <scope>NUCLEOTIDE SEQUENCE [LARGE SCALE GENOMIC DNA]</scope>
    <source>
        <strain>KACC10331 / KXO85</strain>
    </source>
</reference>
<name>KTHY_XANOR</name>
<comment type="function">
    <text evidence="1">Phosphorylation of dTMP to form dTDP in both de novo and salvage pathways of dTTP synthesis.</text>
</comment>
<comment type="catalytic activity">
    <reaction evidence="1">
        <text>dTMP + ATP = dTDP + ADP</text>
        <dbReference type="Rhea" id="RHEA:13517"/>
        <dbReference type="ChEBI" id="CHEBI:30616"/>
        <dbReference type="ChEBI" id="CHEBI:58369"/>
        <dbReference type="ChEBI" id="CHEBI:63528"/>
        <dbReference type="ChEBI" id="CHEBI:456216"/>
        <dbReference type="EC" id="2.7.4.9"/>
    </reaction>
</comment>
<comment type="similarity">
    <text evidence="1">Belongs to the thymidylate kinase family.</text>
</comment>
<protein>
    <recommendedName>
        <fullName evidence="1">Thymidylate kinase</fullName>
        <ecNumber evidence="1">2.7.4.9</ecNumber>
    </recommendedName>
    <alternativeName>
        <fullName evidence="1">dTMP kinase</fullName>
    </alternativeName>
</protein>
<accession>Q5H5T5</accession>
<feature type="chain" id="PRO_0000155376" description="Thymidylate kinase">
    <location>
        <begin position="1"/>
        <end position="227"/>
    </location>
</feature>
<feature type="binding site" evidence="1">
    <location>
        <begin position="16"/>
        <end position="23"/>
    </location>
    <ligand>
        <name>ATP</name>
        <dbReference type="ChEBI" id="CHEBI:30616"/>
    </ligand>
</feature>
<organism>
    <name type="scientific">Xanthomonas oryzae pv. oryzae (strain KACC10331 / KXO85)</name>
    <dbReference type="NCBI Taxonomy" id="291331"/>
    <lineage>
        <taxon>Bacteria</taxon>
        <taxon>Pseudomonadati</taxon>
        <taxon>Pseudomonadota</taxon>
        <taxon>Gammaproteobacteria</taxon>
        <taxon>Lysobacterales</taxon>
        <taxon>Lysobacteraceae</taxon>
        <taxon>Xanthomonas</taxon>
    </lineage>
</organism>
<evidence type="ECO:0000255" key="1">
    <source>
        <dbReference type="HAMAP-Rule" id="MF_00165"/>
    </source>
</evidence>
<proteinExistence type="inferred from homology"/>
<gene>
    <name evidence="1" type="primary">tmk</name>
    <name type="ordered locus">XOO0431</name>
</gene>
<keyword id="KW-0067">ATP-binding</keyword>
<keyword id="KW-0418">Kinase</keyword>
<keyword id="KW-0545">Nucleotide biosynthesis</keyword>
<keyword id="KW-0547">Nucleotide-binding</keyword>
<keyword id="KW-1185">Reference proteome</keyword>
<keyword id="KW-0808">Transferase</keyword>
<dbReference type="EC" id="2.7.4.9" evidence="1"/>
<dbReference type="EMBL" id="AE013598">
    <property type="protein sequence ID" value="AAW73685.1"/>
    <property type="molecule type" value="Genomic_DNA"/>
</dbReference>
<dbReference type="SMR" id="Q5H5T5"/>
<dbReference type="STRING" id="291331.XOO0431"/>
<dbReference type="KEGG" id="xoo:XOO0431"/>
<dbReference type="HOGENOM" id="CLU_049131_0_2_6"/>
<dbReference type="Proteomes" id="UP000006735">
    <property type="component" value="Chromosome"/>
</dbReference>
<dbReference type="GO" id="GO:0005829">
    <property type="term" value="C:cytosol"/>
    <property type="evidence" value="ECO:0007669"/>
    <property type="project" value="TreeGrafter"/>
</dbReference>
<dbReference type="GO" id="GO:0005524">
    <property type="term" value="F:ATP binding"/>
    <property type="evidence" value="ECO:0007669"/>
    <property type="project" value="UniProtKB-UniRule"/>
</dbReference>
<dbReference type="GO" id="GO:0004798">
    <property type="term" value="F:dTMP kinase activity"/>
    <property type="evidence" value="ECO:0007669"/>
    <property type="project" value="UniProtKB-UniRule"/>
</dbReference>
<dbReference type="GO" id="GO:0006233">
    <property type="term" value="P:dTDP biosynthetic process"/>
    <property type="evidence" value="ECO:0007669"/>
    <property type="project" value="InterPro"/>
</dbReference>
<dbReference type="GO" id="GO:0006235">
    <property type="term" value="P:dTTP biosynthetic process"/>
    <property type="evidence" value="ECO:0007669"/>
    <property type="project" value="UniProtKB-UniRule"/>
</dbReference>
<dbReference type="GO" id="GO:0006227">
    <property type="term" value="P:dUDP biosynthetic process"/>
    <property type="evidence" value="ECO:0007669"/>
    <property type="project" value="TreeGrafter"/>
</dbReference>
<dbReference type="CDD" id="cd01672">
    <property type="entry name" value="TMPK"/>
    <property type="match status" value="1"/>
</dbReference>
<dbReference type="Gene3D" id="3.40.50.300">
    <property type="entry name" value="P-loop containing nucleotide triphosphate hydrolases"/>
    <property type="match status" value="1"/>
</dbReference>
<dbReference type="HAMAP" id="MF_00165">
    <property type="entry name" value="Thymidylate_kinase"/>
    <property type="match status" value="1"/>
</dbReference>
<dbReference type="InterPro" id="IPR027417">
    <property type="entry name" value="P-loop_NTPase"/>
</dbReference>
<dbReference type="InterPro" id="IPR039430">
    <property type="entry name" value="Thymidylate_kin-like_dom"/>
</dbReference>
<dbReference type="InterPro" id="IPR018094">
    <property type="entry name" value="Thymidylate_kinase"/>
</dbReference>
<dbReference type="NCBIfam" id="TIGR00041">
    <property type="entry name" value="DTMP_kinase"/>
    <property type="match status" value="1"/>
</dbReference>
<dbReference type="PANTHER" id="PTHR10344">
    <property type="entry name" value="THYMIDYLATE KINASE"/>
    <property type="match status" value="1"/>
</dbReference>
<dbReference type="PANTHER" id="PTHR10344:SF4">
    <property type="entry name" value="UMP-CMP KINASE 2, MITOCHONDRIAL"/>
    <property type="match status" value="1"/>
</dbReference>
<dbReference type="Pfam" id="PF02223">
    <property type="entry name" value="Thymidylate_kin"/>
    <property type="match status" value="1"/>
</dbReference>
<dbReference type="SUPFAM" id="SSF52540">
    <property type="entry name" value="P-loop containing nucleoside triphosphate hydrolases"/>
    <property type="match status" value="1"/>
</dbReference>